<dbReference type="EC" id="3.4.23.-"/>
<dbReference type="EC" id="2.7.7.49"/>
<dbReference type="EC" id="2.7.7.7"/>
<dbReference type="EC" id="3.1.26.4"/>
<dbReference type="EMBL" id="U20939">
    <property type="status" value="NOT_ANNOTATED_CDS"/>
    <property type="molecule type" value="Genomic_DNA"/>
</dbReference>
<dbReference type="PIR" id="S69967">
    <property type="entry name" value="S69967"/>
</dbReference>
<dbReference type="MEROPS" id="A11.003"/>
<dbReference type="GO" id="GO:0005737">
    <property type="term" value="C:cytoplasm"/>
    <property type="evidence" value="ECO:0007669"/>
    <property type="project" value="UniProtKB-SubCell"/>
</dbReference>
<dbReference type="GO" id="GO:0005634">
    <property type="term" value="C:nucleus"/>
    <property type="evidence" value="ECO:0007669"/>
    <property type="project" value="UniProtKB-SubCell"/>
</dbReference>
<dbReference type="GO" id="GO:0004190">
    <property type="term" value="F:aspartic-type endopeptidase activity"/>
    <property type="evidence" value="ECO:0007669"/>
    <property type="project" value="UniProtKB-KW"/>
</dbReference>
<dbReference type="GO" id="GO:0005524">
    <property type="term" value="F:ATP binding"/>
    <property type="evidence" value="ECO:0007669"/>
    <property type="project" value="UniProtKB-KW"/>
</dbReference>
<dbReference type="GO" id="GO:0003677">
    <property type="term" value="F:DNA binding"/>
    <property type="evidence" value="ECO:0007669"/>
    <property type="project" value="UniProtKB-KW"/>
</dbReference>
<dbReference type="GO" id="GO:0003887">
    <property type="term" value="F:DNA-directed DNA polymerase activity"/>
    <property type="evidence" value="ECO:0007669"/>
    <property type="project" value="UniProtKB-KW"/>
</dbReference>
<dbReference type="GO" id="GO:0003723">
    <property type="term" value="F:RNA binding"/>
    <property type="evidence" value="ECO:0007669"/>
    <property type="project" value="UniProtKB-KW"/>
</dbReference>
<dbReference type="GO" id="GO:0003964">
    <property type="term" value="F:RNA-directed DNA polymerase activity"/>
    <property type="evidence" value="ECO:0007669"/>
    <property type="project" value="UniProtKB-KW"/>
</dbReference>
<dbReference type="GO" id="GO:0004523">
    <property type="term" value="F:RNA-DNA hybrid ribonuclease activity"/>
    <property type="evidence" value="ECO:0007669"/>
    <property type="project" value="UniProtKB-EC"/>
</dbReference>
<dbReference type="GO" id="GO:0008270">
    <property type="term" value="F:zinc ion binding"/>
    <property type="evidence" value="ECO:0007669"/>
    <property type="project" value="UniProtKB-KW"/>
</dbReference>
<dbReference type="GO" id="GO:0015074">
    <property type="term" value="P:DNA integration"/>
    <property type="evidence" value="ECO:0007669"/>
    <property type="project" value="UniProtKB-KW"/>
</dbReference>
<dbReference type="GO" id="GO:0006310">
    <property type="term" value="P:DNA recombination"/>
    <property type="evidence" value="ECO:0007669"/>
    <property type="project" value="UniProtKB-KW"/>
</dbReference>
<dbReference type="GO" id="GO:0006508">
    <property type="term" value="P:proteolysis"/>
    <property type="evidence" value="ECO:0007669"/>
    <property type="project" value="UniProtKB-KW"/>
</dbReference>
<dbReference type="GO" id="GO:0032196">
    <property type="term" value="P:transposition"/>
    <property type="evidence" value="ECO:0007669"/>
    <property type="project" value="UniProtKB-KW"/>
</dbReference>
<dbReference type="GO" id="GO:0075523">
    <property type="term" value="P:viral translational frameshifting"/>
    <property type="evidence" value="ECO:0007669"/>
    <property type="project" value="UniProtKB-KW"/>
</dbReference>
<dbReference type="FunFam" id="3.30.420.10:FF:000050">
    <property type="entry name" value="Transposon Ty2-DR3 Gag-Pol polyprotein"/>
    <property type="match status" value="1"/>
</dbReference>
<dbReference type="Gene3D" id="3.30.420.10">
    <property type="entry name" value="Ribonuclease H-like superfamily/Ribonuclease H"/>
    <property type="match status" value="1"/>
</dbReference>
<dbReference type="InterPro" id="IPR043502">
    <property type="entry name" value="DNA/RNA_pol_sf"/>
</dbReference>
<dbReference type="InterPro" id="IPR001584">
    <property type="entry name" value="Integrase_cat-core"/>
</dbReference>
<dbReference type="InterPro" id="IPR054722">
    <property type="entry name" value="PolX-like_BBD"/>
</dbReference>
<dbReference type="InterPro" id="IPR039537">
    <property type="entry name" value="Retrotran_Ty1/copia-like"/>
</dbReference>
<dbReference type="InterPro" id="IPR012337">
    <property type="entry name" value="RNaseH-like_sf"/>
</dbReference>
<dbReference type="InterPro" id="IPR036397">
    <property type="entry name" value="RNaseH_sf"/>
</dbReference>
<dbReference type="InterPro" id="IPR013103">
    <property type="entry name" value="RVT_2"/>
</dbReference>
<dbReference type="InterPro" id="IPR015820">
    <property type="entry name" value="TYA"/>
</dbReference>
<dbReference type="PANTHER" id="PTHR42648">
    <property type="entry name" value="TRANSPOSASE, PUTATIVE-RELATED"/>
    <property type="match status" value="1"/>
</dbReference>
<dbReference type="PANTHER" id="PTHR42648:SF11">
    <property type="entry name" value="TRANSPOSON TY4-P GAG-POL POLYPROTEIN"/>
    <property type="match status" value="1"/>
</dbReference>
<dbReference type="Pfam" id="PF22936">
    <property type="entry name" value="Pol_BBD"/>
    <property type="match status" value="1"/>
</dbReference>
<dbReference type="Pfam" id="PF00665">
    <property type="entry name" value="rve"/>
    <property type="match status" value="1"/>
</dbReference>
<dbReference type="Pfam" id="PF07727">
    <property type="entry name" value="RVT_2"/>
    <property type="match status" value="1"/>
</dbReference>
<dbReference type="Pfam" id="PF01021">
    <property type="entry name" value="TYA"/>
    <property type="match status" value="1"/>
</dbReference>
<dbReference type="SUPFAM" id="SSF56672">
    <property type="entry name" value="DNA/RNA polymerases"/>
    <property type="match status" value="1"/>
</dbReference>
<dbReference type="SUPFAM" id="SSF53098">
    <property type="entry name" value="Ribonuclease H-like"/>
    <property type="match status" value="1"/>
</dbReference>
<dbReference type="PROSITE" id="PS50994">
    <property type="entry name" value="INTEGRASE"/>
    <property type="match status" value="1"/>
</dbReference>
<feature type="chain" id="PRO_0000279332" description="Transposon Ty2-LR2 Gag-Pol polyprotein">
    <location>
        <begin position="1"/>
        <end position="1598"/>
    </location>
</feature>
<feature type="chain" id="PRO_0000279333" description="Capsid protein" evidence="1">
    <location>
        <begin position="1"/>
        <end position="397"/>
    </location>
</feature>
<feature type="chain" id="PRO_0000279334" description="Ty2 protease" evidence="1">
    <location>
        <begin position="398"/>
        <end position="578"/>
    </location>
</feature>
<feature type="chain" id="PRO_0000279335" description="Integrase" evidence="1">
    <location>
        <begin position="579"/>
        <end position="1232"/>
    </location>
</feature>
<feature type="chain" id="PRO_0000279336" description="Reverse transcriptase/ribonuclease H" evidence="1">
    <location>
        <begin position="1233"/>
        <end position="1598"/>
    </location>
</feature>
<feature type="domain" description="Integrase catalytic" evidence="2">
    <location>
        <begin position="656"/>
        <end position="831"/>
    </location>
</feature>
<feature type="domain" description="Reverse transcriptase Ty1/copia-type">
    <location>
        <begin position="1353"/>
        <end position="1491"/>
    </location>
</feature>
<feature type="region of interest" description="Disordered" evidence="3">
    <location>
        <begin position="1"/>
        <end position="88"/>
    </location>
</feature>
<feature type="region of interest" description="RNA-binding" evidence="1">
    <location>
        <begin position="295"/>
        <end position="397"/>
    </location>
</feature>
<feature type="region of interest" description="Disordered" evidence="3">
    <location>
        <begin position="359"/>
        <end position="449"/>
    </location>
</feature>
<feature type="region of interest" description="Integrase-type zinc finger-like">
    <location>
        <begin position="579"/>
        <end position="636"/>
    </location>
</feature>
<feature type="region of interest" description="Disordered" evidence="3">
    <location>
        <begin position="915"/>
        <end position="934"/>
    </location>
</feature>
<feature type="region of interest" description="Disordered" evidence="3">
    <location>
        <begin position="1004"/>
        <end position="1034"/>
    </location>
</feature>
<feature type="region of interest" description="Disordered" evidence="3">
    <location>
        <begin position="1059"/>
        <end position="1135"/>
    </location>
</feature>
<feature type="region of interest" description="Disordered" evidence="3">
    <location>
        <begin position="1146"/>
        <end position="1165"/>
    </location>
</feature>
<feature type="region of interest" description="Disordered" evidence="3">
    <location>
        <begin position="1170"/>
        <end position="1205"/>
    </location>
</feature>
<feature type="short sequence motif" description="Bipartite nuclear localization signal" evidence="1">
    <location>
        <begin position="1193"/>
        <end position="1227"/>
    </location>
</feature>
<feature type="compositionally biased region" description="Polar residues" evidence="3">
    <location>
        <begin position="1"/>
        <end position="11"/>
    </location>
</feature>
<feature type="compositionally biased region" description="Polar residues" evidence="3">
    <location>
        <begin position="19"/>
        <end position="39"/>
    </location>
</feature>
<feature type="compositionally biased region" description="Polar residues" evidence="3">
    <location>
        <begin position="49"/>
        <end position="60"/>
    </location>
</feature>
<feature type="compositionally biased region" description="Low complexity" evidence="3">
    <location>
        <begin position="369"/>
        <end position="381"/>
    </location>
</feature>
<feature type="compositionally biased region" description="Polar residues" evidence="3">
    <location>
        <begin position="399"/>
        <end position="408"/>
    </location>
</feature>
<feature type="compositionally biased region" description="Polar residues" evidence="3">
    <location>
        <begin position="415"/>
        <end position="435"/>
    </location>
</feature>
<feature type="compositionally biased region" description="Polar residues" evidence="3">
    <location>
        <begin position="915"/>
        <end position="927"/>
    </location>
</feature>
<feature type="compositionally biased region" description="Polar residues" evidence="3">
    <location>
        <begin position="1009"/>
        <end position="1034"/>
    </location>
</feature>
<feature type="compositionally biased region" description="Polar residues" evidence="3">
    <location>
        <begin position="1065"/>
        <end position="1082"/>
    </location>
</feature>
<feature type="compositionally biased region" description="Basic and acidic residues" evidence="3">
    <location>
        <begin position="1151"/>
        <end position="1165"/>
    </location>
</feature>
<feature type="active site" description="For protease activity; shared with dimeric partner" evidence="1">
    <location>
        <position position="457"/>
    </location>
</feature>
<feature type="binding site" evidence="2">
    <location>
        <position position="667"/>
    </location>
    <ligand>
        <name>Mg(2+)</name>
        <dbReference type="ChEBI" id="CHEBI:18420"/>
        <label>1</label>
        <note>catalytic; for integrase activity</note>
    </ligand>
</feature>
<feature type="binding site" evidence="2">
    <location>
        <position position="732"/>
    </location>
    <ligand>
        <name>Mg(2+)</name>
        <dbReference type="ChEBI" id="CHEBI:18420"/>
        <label>1</label>
        <note>catalytic; for integrase activity</note>
    </ligand>
</feature>
<feature type="binding site" evidence="2">
    <location>
        <position position="1361"/>
    </location>
    <ligand>
        <name>Mg(2+)</name>
        <dbReference type="ChEBI" id="CHEBI:18420"/>
        <label>2</label>
        <note>catalytic; for reverse transcriptase activity</note>
    </ligand>
</feature>
<feature type="binding site" evidence="2">
    <location>
        <position position="1442"/>
    </location>
    <ligand>
        <name>Mg(2+)</name>
        <dbReference type="ChEBI" id="CHEBI:18420"/>
        <label>2</label>
        <note>catalytic; for reverse transcriptase activity</note>
    </ligand>
</feature>
<feature type="binding site" evidence="2">
    <location>
        <position position="1443"/>
    </location>
    <ligand>
        <name>Mg(2+)</name>
        <dbReference type="ChEBI" id="CHEBI:18420"/>
        <label>2</label>
        <note>catalytic; for reverse transcriptase activity</note>
    </ligand>
</feature>
<feature type="site" description="Cleavage; by Ty2 protease" evidence="1">
    <location>
        <begin position="397"/>
        <end position="398"/>
    </location>
</feature>
<feature type="site" description="Cleavage; by Ty2 protease" evidence="1">
    <location>
        <begin position="578"/>
        <end position="579"/>
    </location>
</feature>
<feature type="site" description="Cleavage; by Ty2 protease" evidence="1">
    <location>
        <begin position="1232"/>
        <end position="1233"/>
    </location>
</feature>
<gene>
    <name type="primary">TY2B-LR2</name>
    <name type="synonym">YLRCTy2-2 POL</name>
    <name type="ordered locus">YLR424C-A</name>
    <name type="ORF">L9576.6c</name>
</gene>
<name>YL22B_YEAST</name>
<sequence>MESQQLHQNPHSLHGSAYASVTSKEVPSNQDPLAVSASNLPEFDRDSTKVNSQEETTPGTSAVPENHHHVSPQPASVPPPQNGQYQQHGMMTPNKAMASNWAHYQQPSMMTCSHYQTSPAYYQPDPHYPLPQYIPPLSTSSPDPIDSQDQHSEVPQAKTKVRNNVLPPHTLTSEENFSTWVKFYIRFLKNSNLGDIIPNDQGEIKRQMTYEEHAYIYNTFQAFAPFHLLPTWVKQILEINYSDILTVLCKSVSKMQTNNQELKDWIALANLEYNGSTSADTFEITVSTIIQRLKENNINVSDRLACQLILKGLSGDFKYLRNQYRTKTNMKLSQLFAEIQLIYDENKIMNLNKPSQYKQHSEYKNVSRTSPNTTNTKVTTRNYHRTNSSKPRAAKAHNIATSSKFSRVNNDHINESTVSSQYLSDDNELSLGQQQKESKPTRTIDSNDELPDHLLIDSGASQTLVRSAHYLHHATPNSEINIVDAQKQDIPINAIGNLHFNFQNGTKTSIKALHTPNIAYDLLSLSELANQNITACFTRNTLERSDGTVLAPIVKHGDFYWLSKKYLIPSHISKLTINNVNKSKSVNKYPYPLIHRMLGHANFRSIQKSLKKNAVTYLKESDIEWSNASTYQCPDCLIGKSTKHRHVKGSRLKYQESYEPFQYLHTDIFGPVHHLPKSAPSYFISFTDEKTRFQWVYPLHDRREESILNVFTSILAFIKNQFNARVLVIQMDRGSEYTNKTLHKFFTNRGITACYTTTADSRAHGVAERLNRTLLNDCRTLLHCSGLPNHLWFSAVEFSTIIRNSLVSPKNDKSARQHAGLAGLDITTILPFGQPVIVNNHNPDSKIHPRGIPGYALHPSRNSYGYIIYLPSLKKTVDTTNYVILQNKQTKLDQFDYDTLTFDDDLNRLTAHNQSFIEQNETEQSYDQNKESDHDYQSEIEINSDPLVNDFSSQSINPLQLDKEPVQKVRAPKEVDADISEYNILPSTIRSRTPHIINKESTEMGGTVESDTTSPRHSSTFTARNQNRPGSTNEMIDLTSQDRVNYGLENIKTTRLGGTEEPYIQRNSDTNIKYRTTNSTPSIDDRSSNSESTTPIISIETKAVCDNTPSIDTDPPEYRSSDHATPNIMPDKSSKNVTADSILDDLPLPDLTHKSPTDTSDVSKDIPHIHSRQTNSSLGGMDDSNVLTTTKSKKRSLEDNETEIEVSRDTWNNKNMRSLEPPRSKKRINLIAAIKGVKSIKPVRTTLRYDEAITYNKDNKEKDRYVEAYHKEISQLLKMNTWDTNKYYDRNDIDPKKVINSMFIFNKKRDGTHKARFVARSDIQHPDTYDSDMQSNTVHHYALMTSLSIALDNDYYITQLDISSAYLYADIKEELYIRPPPHLGLNDKLLRLRKSLYGLKQSGANWYETIKSYLINCCDMQEVRGWSCVFKNSQVTICLFVDDMILFSKDLNANKKIITTLKKQYDTKIINLGEGDNEIQYDILGLEIKYQRSKYMKLGMEKSLTEKLPKLNVPLNPKGKKLRAPGQPGHYIDQDELEINEEKFRNRFFGTKAMRLRDEVSGNNLYVYYIETKKNIADVMTKPLPIKTFKLLTNKWIH</sequence>
<evidence type="ECO:0000250" key="1"/>
<evidence type="ECO:0000255" key="2">
    <source>
        <dbReference type="PROSITE-ProRule" id="PRU00457"/>
    </source>
</evidence>
<evidence type="ECO:0000256" key="3">
    <source>
        <dbReference type="SAM" id="MobiDB-lite"/>
    </source>
</evidence>
<evidence type="ECO:0000305" key="4">
    <source>
    </source>
</evidence>
<evidence type="ECO:0000305" key="5">
    <source>
    </source>
</evidence>
<reference key="1">
    <citation type="journal article" date="1997" name="Nature">
        <title>The nucleotide sequence of Saccharomyces cerevisiae chromosome XII.</title>
        <authorList>
            <person name="Johnston M."/>
            <person name="Hillier L.W."/>
            <person name="Riles L."/>
            <person name="Albermann K."/>
            <person name="Andre B."/>
            <person name="Ansorge W."/>
            <person name="Benes V."/>
            <person name="Brueckner M."/>
            <person name="Delius H."/>
            <person name="Dubois E."/>
            <person name="Duesterhoeft A."/>
            <person name="Entian K.-D."/>
            <person name="Floeth M."/>
            <person name="Goffeau A."/>
            <person name="Hebling U."/>
            <person name="Heumann K."/>
            <person name="Heuss-Neitzel D."/>
            <person name="Hilbert H."/>
            <person name="Hilger F."/>
            <person name="Kleine K."/>
            <person name="Koetter P."/>
            <person name="Louis E.J."/>
            <person name="Messenguy F."/>
            <person name="Mewes H.-W."/>
            <person name="Miosga T."/>
            <person name="Moestl D."/>
            <person name="Mueller-Auer S."/>
            <person name="Nentwich U."/>
            <person name="Obermaier B."/>
            <person name="Piravandi E."/>
            <person name="Pohl T.M."/>
            <person name="Portetelle D."/>
            <person name="Purnelle B."/>
            <person name="Rechmann S."/>
            <person name="Rieger M."/>
            <person name="Rinke M."/>
            <person name="Rose M."/>
            <person name="Scharfe M."/>
            <person name="Scherens B."/>
            <person name="Scholler P."/>
            <person name="Schwager C."/>
            <person name="Schwarz S."/>
            <person name="Underwood A.P."/>
            <person name="Urrestarazu L.A."/>
            <person name="Vandenbol M."/>
            <person name="Verhasselt P."/>
            <person name="Vierendeels F."/>
            <person name="Voet M."/>
            <person name="Volckaert G."/>
            <person name="Voss H."/>
            <person name="Wambutt R."/>
            <person name="Wedler E."/>
            <person name="Wedler H."/>
            <person name="Zimmermann F.K."/>
            <person name="Zollner A."/>
            <person name="Hani J."/>
            <person name="Hoheisel J.D."/>
        </authorList>
    </citation>
    <scope>NUCLEOTIDE SEQUENCE [LARGE SCALE GENOMIC DNA]</scope>
    <source>
        <strain>ATCC 204508 / S288c</strain>
    </source>
</reference>
<reference key="2">
    <citation type="journal article" date="2014" name="G3 (Bethesda)">
        <title>The reference genome sequence of Saccharomyces cerevisiae: Then and now.</title>
        <authorList>
            <person name="Engel S.R."/>
            <person name="Dietrich F.S."/>
            <person name="Fisk D.G."/>
            <person name="Binkley G."/>
            <person name="Balakrishnan R."/>
            <person name="Costanzo M.C."/>
            <person name="Dwight S.S."/>
            <person name="Hitz B.C."/>
            <person name="Karra K."/>
            <person name="Nash R.S."/>
            <person name="Weng S."/>
            <person name="Wong E.D."/>
            <person name="Lloyd P."/>
            <person name="Skrzypek M.S."/>
            <person name="Miyasato S.R."/>
            <person name="Simison M."/>
            <person name="Cherry J.M."/>
        </authorList>
    </citation>
    <scope>GENOME REANNOTATION</scope>
    <source>
        <strain>ATCC 204508 / S288c</strain>
    </source>
</reference>
<reference key="3">
    <citation type="journal article" date="1998" name="Genome Res.">
        <title>Transposable elements and genome organization: a comprehensive survey of retrotransposons revealed by the complete Saccharomyces cerevisiae genome sequence.</title>
        <authorList>
            <person name="Kim J.M."/>
            <person name="Vanguri S."/>
            <person name="Boeke J.D."/>
            <person name="Gabriel A."/>
            <person name="Voytas D.F."/>
        </authorList>
    </citation>
    <scope>NOMENCLATURE</scope>
    <scope>IDENTIFICATION OF DELETION</scope>
</reference>
<reference key="4">
    <citation type="journal article" date="2005" name="Cytogenet. Genome Res.">
        <title>Happy together: the life and times of Ty retrotransposons and their hosts.</title>
        <authorList>
            <person name="Lesage P."/>
            <person name="Todeschini A.L."/>
        </authorList>
    </citation>
    <scope>REVIEW</scope>
</reference>
<organism>
    <name type="scientific">Saccharomyces cerevisiae (strain ATCC 204508 / S288c)</name>
    <name type="common">Baker's yeast</name>
    <dbReference type="NCBI Taxonomy" id="559292"/>
    <lineage>
        <taxon>Eukaryota</taxon>
        <taxon>Fungi</taxon>
        <taxon>Dikarya</taxon>
        <taxon>Ascomycota</taxon>
        <taxon>Saccharomycotina</taxon>
        <taxon>Saccharomycetes</taxon>
        <taxon>Saccharomycetales</taxon>
        <taxon>Saccharomycetaceae</taxon>
        <taxon>Saccharomyces</taxon>
    </lineage>
</organism>
<proteinExistence type="uncertain"/>
<keyword id="KW-0064">Aspartyl protease</keyword>
<keyword id="KW-0067">ATP-binding</keyword>
<keyword id="KW-0963">Cytoplasm</keyword>
<keyword id="KW-0229">DNA integration</keyword>
<keyword id="KW-0233">DNA recombination</keyword>
<keyword id="KW-0238">DNA-binding</keyword>
<keyword id="KW-0239">DNA-directed DNA polymerase</keyword>
<keyword id="KW-0255">Endonuclease</keyword>
<keyword id="KW-0378">Hydrolase</keyword>
<keyword id="KW-0460">Magnesium</keyword>
<keyword id="KW-0479">Metal-binding</keyword>
<keyword id="KW-0511">Multifunctional enzyme</keyword>
<keyword id="KW-0540">Nuclease</keyword>
<keyword id="KW-0547">Nucleotide-binding</keyword>
<keyword id="KW-0548">Nucleotidyltransferase</keyword>
<keyword id="KW-0539">Nucleus</keyword>
<keyword id="KW-0645">Protease</keyword>
<keyword id="KW-0688">Ribosomal frameshifting</keyword>
<keyword id="KW-0694">RNA-binding</keyword>
<keyword id="KW-0695">RNA-directed DNA polymerase</keyword>
<keyword id="KW-0808">Transferase</keyword>
<keyword id="KW-0814">Transposable element</keyword>
<keyword id="KW-0815">Transposition</keyword>
<keyword id="KW-1188">Viral release from host cell</keyword>
<keyword id="KW-0917">Virion maturation</keyword>
<keyword id="KW-0862">Zinc</keyword>
<keyword id="KW-0863">Zinc-finger</keyword>
<protein>
    <recommendedName>
        <fullName>Transposon Ty2-LR2 Gag-Pol polyprotein</fullName>
    </recommendedName>
    <alternativeName>
        <fullName>TY2A-TY2B</fullName>
    </alternativeName>
    <alternativeName>
        <fullName>Transposon Ty2 TYA-TYB polyprotein</fullName>
    </alternativeName>
    <component>
        <recommendedName>
            <fullName>Capsid protein</fullName>
            <shortName>CA</shortName>
        </recommendedName>
    </component>
    <component>
        <recommendedName>
            <fullName>Ty2 protease</fullName>
            <shortName>PR</shortName>
            <ecNumber>3.4.23.-</ecNumber>
        </recommendedName>
    </component>
    <component>
        <recommendedName>
            <fullName>Integrase</fullName>
            <shortName>IN</shortName>
        </recommendedName>
    </component>
    <component>
        <recommendedName>
            <fullName>Reverse transcriptase/ribonuclease H</fullName>
            <shortName>RT</shortName>
            <shortName>RT-RH</shortName>
            <ecNumber>2.7.7.49</ecNumber>
            <ecNumber>2.7.7.7</ecNumber>
            <ecNumber>3.1.26.4</ecNumber>
        </recommendedName>
    </component>
</protein>
<comment type="function">
    <text evidence="1">Capsid protein (CA) is the structural component of the virus-like particle (VLP), forming the shell that encapsulates the retrotransposons dimeric RNA genome. The particles are assembled from trimer-clustered units and there are holes in the capsid shells that allow for the diffusion of macromolecules. CA also has nucleocapsid-like chaperone activity, promoting primer tRNA(i)-Met annealing to the multipartite primer-binding site (PBS), dimerization of Ty2 RNA and initiation of reverse transcription (By similarity).</text>
</comment>
<comment type="function">
    <text evidence="1">The aspartyl protease (PR) mediates the proteolytic cleavages of the Gag and Gag-Pol polyproteins after assembly of the VLP.</text>
</comment>
<comment type="function">
    <text evidence="1">Reverse transcriptase/ribonuclease H (RT) is a multifunctional enzyme that catalyzes the conversion of the retro-elements RNA genome into dsDNA within the VLP. The enzyme displays a DNA polymerase activity that can copy either DNA or RNA templates, and a ribonuclease H (RNase H) activity that cleaves the RNA strand of RNA-DNA heteroduplexes during plus-strand synthesis and hydrolyzes RNA primers. The conversion leads to a linear dsDNA copy of the retrotransposon that includes long terminal repeats (LTRs) at both ends (By similarity).</text>
</comment>
<comment type="function">
    <text evidence="1">Integrase (IN) targets the VLP to the nucleus, where a subparticle preintegration complex (PIC) containing at least integrase and the newly synthesized dsDNA copy of the retrotransposon must transit the nuclear membrane. Once in the nucleus, integrase performs the integration of the dsDNA into the host genome (By similarity).</text>
</comment>
<comment type="catalytic activity">
    <reaction>
        <text>DNA(n) + a 2'-deoxyribonucleoside 5'-triphosphate = DNA(n+1) + diphosphate</text>
        <dbReference type="Rhea" id="RHEA:22508"/>
        <dbReference type="Rhea" id="RHEA-COMP:17339"/>
        <dbReference type="Rhea" id="RHEA-COMP:17340"/>
        <dbReference type="ChEBI" id="CHEBI:33019"/>
        <dbReference type="ChEBI" id="CHEBI:61560"/>
        <dbReference type="ChEBI" id="CHEBI:173112"/>
        <dbReference type="EC" id="2.7.7.49"/>
    </reaction>
</comment>
<comment type="catalytic activity">
    <reaction>
        <text>DNA(n) + a 2'-deoxyribonucleoside 5'-triphosphate = DNA(n+1) + diphosphate</text>
        <dbReference type="Rhea" id="RHEA:22508"/>
        <dbReference type="Rhea" id="RHEA-COMP:17339"/>
        <dbReference type="Rhea" id="RHEA-COMP:17340"/>
        <dbReference type="ChEBI" id="CHEBI:33019"/>
        <dbReference type="ChEBI" id="CHEBI:61560"/>
        <dbReference type="ChEBI" id="CHEBI:173112"/>
        <dbReference type="EC" id="2.7.7.7"/>
    </reaction>
</comment>
<comment type="catalytic activity">
    <reaction>
        <text>Endonucleolytic cleavage to 5'-phosphomonoester.</text>
        <dbReference type="EC" id="3.1.26.4"/>
    </reaction>
</comment>
<comment type="subunit">
    <text evidence="1">The capsid protein forms a homotrimer, from which the VLPs are assembled. The protease is a homodimer, whose active site consists of two apposed aspartic acid residues (By similarity).</text>
</comment>
<comment type="subcellular location">
    <subcellularLocation>
        <location>Cytoplasm</location>
    </subcellularLocation>
    <subcellularLocation>
        <location evidence="1">Nucleus</location>
    </subcellularLocation>
</comment>
<comment type="alternative products">
    <event type="ribosomal frameshifting"/>
    <isoform>
        <id>P0C2J5-1</id>
        <name>Transposon Ty2-LR2 Gag-Pol polyprotein</name>
        <sequence type="displayed"/>
    </isoform>
    <isoform>
        <id>P0C2J6-1</id>
        <name>Transposon Ty2-LR2 Gag polyprotein</name>
        <sequence type="external"/>
    </isoform>
    <text>The Gag-Pol polyprotein is generated by a +1 ribosomal frameshift.</text>
</comment>
<comment type="domain">
    <text evidence="1">The C-terminal RNA-binding region of CA is sufficient for all its nucleocapsid-like chaperone activities.</text>
</comment>
<comment type="domain">
    <text evidence="1">Integrase core domain contains the D-x(n)-D-x(35)-E motif, named for the phylogenetically conserved glutamic acid and aspartic acid residues and the invariant 35 amino acid spacing between the second and third acidic residues. Each acidic residue of the D,D(35)E motif is independently essential for the 3'-processing and strand transfer activities of purified integrase protein (By similarity).</text>
</comment>
<comment type="PTM">
    <text evidence="1">Initially, virus-like particles (VLPs) are composed of the structural unprocessed proteins Gag and Gag-Pol, and also contain the host initiator methionine tRNA (tRNA(i)-Met) which serves as a primer for minus-strand DNA synthesis, and a dimer of genomic Ty RNA. Processing of the polyproteins occurs within the particle and proceeds by an ordered pathway, called maturation. First, the protease (PR) is released by autocatalytic cleavage of the Gag-Pol polyprotein, and this cleavage is a prerequisite for subsequent processing at the remaining sites to release the mature structural and catalytic proteins. Maturation takes place prior to the RT reaction and is required to produce transposition-competent VLPs (By similarity).</text>
</comment>
<comment type="miscellaneous">
    <text>Retrotransposons are mobile genetic entities that are able to replicate via an RNA intermediate and a reverse transcription step. In contrast to retroviruses, retrotransposons are non-infectious, lack an envelope and remain intracellular. Ty2 retrotransposons belong to the copia elements (pseudoviridae).</text>
</comment>
<comment type="miscellaneous">
    <molecule>Isoform Transposon Ty2-LR2 Gag-Pol polyprotein</molecule>
    <text>Produced by +1 ribosomal frameshifting between codon Leu-431 and Gly-432 of the TY2A ORF.</text>
</comment>
<comment type="caution">
    <text evidence="4 5">Could be the product of a pseudogene unlikely to encode a functional protein. Transposon Ty2-DR2 (YLRCTy2-2) contains a 172 aa deletion at position 1540 compared to other Ty2 elements. Because of that it is not part of the S.cerevisiae S288c complete/reference proteome set.</text>
</comment>
<accession>P0C2J5</accession>